<accession>Q48CT5</accession>
<protein>
    <recommendedName>
        <fullName evidence="1">Pyrroloquinoline-quinone synthase</fullName>
        <ecNumber evidence="1">1.3.3.11</ecNumber>
    </recommendedName>
    <alternativeName>
        <fullName evidence="1">Coenzyme PQQ synthesis protein C</fullName>
    </alternativeName>
    <alternativeName>
        <fullName evidence="1">Pyrroloquinoline quinone biosynthesis protein C</fullName>
    </alternativeName>
</protein>
<reference key="1">
    <citation type="journal article" date="2005" name="J. Bacteriol.">
        <title>Whole-genome sequence analysis of Pseudomonas syringae pv. phaseolicola 1448A reveals divergence among pathovars in genes involved in virulence and transposition.</title>
        <authorList>
            <person name="Joardar V."/>
            <person name="Lindeberg M."/>
            <person name="Jackson R.W."/>
            <person name="Selengut J."/>
            <person name="Dodson R."/>
            <person name="Brinkac L.M."/>
            <person name="Daugherty S.C."/>
            <person name="DeBoy R.T."/>
            <person name="Durkin A.S."/>
            <person name="Gwinn Giglio M."/>
            <person name="Madupu R."/>
            <person name="Nelson W.C."/>
            <person name="Rosovitz M.J."/>
            <person name="Sullivan S.A."/>
            <person name="Crabtree J."/>
            <person name="Creasy T."/>
            <person name="Davidsen T.M."/>
            <person name="Haft D.H."/>
            <person name="Zafar N."/>
            <person name="Zhou L."/>
            <person name="Halpin R."/>
            <person name="Holley T."/>
            <person name="Khouri H.M."/>
            <person name="Feldblyum T.V."/>
            <person name="White O."/>
            <person name="Fraser C.M."/>
            <person name="Chatterjee A.K."/>
            <person name="Cartinhour S."/>
            <person name="Schneider D."/>
            <person name="Mansfield J.W."/>
            <person name="Collmer A."/>
            <person name="Buell R."/>
        </authorList>
    </citation>
    <scope>NUCLEOTIDE SEQUENCE [LARGE SCALE GENOMIC DNA]</scope>
    <source>
        <strain>1448A / Race 6</strain>
    </source>
</reference>
<proteinExistence type="inferred from homology"/>
<keyword id="KW-0560">Oxidoreductase</keyword>
<keyword id="KW-0884">PQQ biosynthesis</keyword>
<sequence length="251" mass="29105">MSEATALSPAEFEQALRAKGAYYHIYHPYHVAMYEGRATREQIQGWVANRFYYQVNIPLKDAAILANCPDREIRREWIQRLLDHDGAPGEDGGIEAWLRLGQAVGLDPDQLRSQELVLPGVRFAVDAYVNFARRANWQEAASSSLTELFAPQIHQSRLDSWPQHYPWIDPAGYEYFRTRLGQARRDVEHGLAITLQHYTTYEGQQRMLEILQFKLDILWSMLDAMSMAYELNRPPYHSVTDQKVWHKGITL</sequence>
<gene>
    <name evidence="1" type="primary">pqqC</name>
    <name type="ordered locus">PSPPH_4706</name>
</gene>
<evidence type="ECO:0000255" key="1">
    <source>
        <dbReference type="HAMAP-Rule" id="MF_00654"/>
    </source>
</evidence>
<name>PQQC_PSE14</name>
<organism>
    <name type="scientific">Pseudomonas savastanoi pv. phaseolicola (strain 1448A / Race 6)</name>
    <name type="common">Pseudomonas syringae pv. phaseolicola (strain 1448A / Race 6)</name>
    <dbReference type="NCBI Taxonomy" id="264730"/>
    <lineage>
        <taxon>Bacteria</taxon>
        <taxon>Pseudomonadati</taxon>
        <taxon>Pseudomonadota</taxon>
        <taxon>Gammaproteobacteria</taxon>
        <taxon>Pseudomonadales</taxon>
        <taxon>Pseudomonadaceae</taxon>
        <taxon>Pseudomonas</taxon>
    </lineage>
</organism>
<comment type="function">
    <text evidence="1">Ring cyclization and eight-electron oxidation of 3a-(2-amino-2-carboxyethyl)-4,5-dioxo-4,5,6,7,8,9-hexahydroquinoline-7,9-dicarboxylic-acid to PQQ.</text>
</comment>
<comment type="catalytic activity">
    <reaction evidence="1">
        <text>6-(2-amino-2-carboxyethyl)-7,8-dioxo-1,2,3,4,7,8-hexahydroquinoline-2,4-dicarboxylate + 3 O2 = pyrroloquinoline quinone + 2 H2O2 + 2 H2O + H(+)</text>
        <dbReference type="Rhea" id="RHEA:10692"/>
        <dbReference type="ChEBI" id="CHEBI:15377"/>
        <dbReference type="ChEBI" id="CHEBI:15378"/>
        <dbReference type="ChEBI" id="CHEBI:15379"/>
        <dbReference type="ChEBI" id="CHEBI:16240"/>
        <dbReference type="ChEBI" id="CHEBI:58442"/>
        <dbReference type="ChEBI" id="CHEBI:58778"/>
        <dbReference type="EC" id="1.3.3.11"/>
    </reaction>
</comment>
<comment type="pathway">
    <text evidence="1">Cofactor biosynthesis; pyrroloquinoline quinone biosynthesis.</text>
</comment>
<comment type="similarity">
    <text evidence="1">Belongs to the PqqC family.</text>
</comment>
<feature type="chain" id="PRO_1000061671" description="Pyrroloquinoline-quinone synthase">
    <location>
        <begin position="1"/>
        <end position="251"/>
    </location>
</feature>
<dbReference type="EC" id="1.3.3.11" evidence="1"/>
<dbReference type="EMBL" id="CP000058">
    <property type="protein sequence ID" value="AAZ34173.1"/>
    <property type="molecule type" value="Genomic_DNA"/>
</dbReference>
<dbReference type="RefSeq" id="WP_002555561.1">
    <property type="nucleotide sequence ID" value="NC_005773.3"/>
</dbReference>
<dbReference type="SMR" id="Q48CT5"/>
<dbReference type="KEGG" id="psp:PSPPH_4706"/>
<dbReference type="eggNOG" id="COG5424">
    <property type="taxonomic scope" value="Bacteria"/>
</dbReference>
<dbReference type="HOGENOM" id="CLU_080136_0_0_6"/>
<dbReference type="UniPathway" id="UPA00539"/>
<dbReference type="Proteomes" id="UP000000551">
    <property type="component" value="Chromosome"/>
</dbReference>
<dbReference type="GO" id="GO:0033732">
    <property type="term" value="F:pyrroloquinoline-quinone synthase activity"/>
    <property type="evidence" value="ECO:0007669"/>
    <property type="project" value="UniProtKB-EC"/>
</dbReference>
<dbReference type="GO" id="GO:0018189">
    <property type="term" value="P:pyrroloquinoline quinone biosynthetic process"/>
    <property type="evidence" value="ECO:0007669"/>
    <property type="project" value="UniProtKB-UniRule"/>
</dbReference>
<dbReference type="GO" id="GO:0006790">
    <property type="term" value="P:sulfur compound metabolic process"/>
    <property type="evidence" value="ECO:0007669"/>
    <property type="project" value="UniProtKB-ARBA"/>
</dbReference>
<dbReference type="CDD" id="cd19370">
    <property type="entry name" value="TenA_PqqC"/>
    <property type="match status" value="1"/>
</dbReference>
<dbReference type="Gene3D" id="1.20.910.10">
    <property type="entry name" value="Heme oxygenase-like"/>
    <property type="match status" value="1"/>
</dbReference>
<dbReference type="HAMAP" id="MF_00654">
    <property type="entry name" value="PQQ_syn_PqqC"/>
    <property type="match status" value="1"/>
</dbReference>
<dbReference type="InterPro" id="IPR016084">
    <property type="entry name" value="Haem_Oase-like_multi-hlx"/>
</dbReference>
<dbReference type="InterPro" id="IPR011845">
    <property type="entry name" value="PqqC"/>
</dbReference>
<dbReference type="InterPro" id="IPR039068">
    <property type="entry name" value="PqqC-like"/>
</dbReference>
<dbReference type="InterPro" id="IPR004305">
    <property type="entry name" value="Thiaminase-2/PQQC"/>
</dbReference>
<dbReference type="NCBIfam" id="TIGR02111">
    <property type="entry name" value="PQQ_syn_pqqC"/>
    <property type="match status" value="1"/>
</dbReference>
<dbReference type="PANTHER" id="PTHR40279:SF3">
    <property type="entry name" value="4-AMINOBENZOATE SYNTHASE"/>
    <property type="match status" value="1"/>
</dbReference>
<dbReference type="PANTHER" id="PTHR40279">
    <property type="entry name" value="PQQC-LIKE PROTEIN"/>
    <property type="match status" value="1"/>
</dbReference>
<dbReference type="Pfam" id="PF03070">
    <property type="entry name" value="TENA_THI-4"/>
    <property type="match status" value="1"/>
</dbReference>
<dbReference type="SUPFAM" id="SSF48613">
    <property type="entry name" value="Heme oxygenase-like"/>
    <property type="match status" value="1"/>
</dbReference>